<name>RPOB_LEPBJ</name>
<sequence>MYGQVERKRVNFGKITNLDYLPNLIQIQKRSFDWFLQADVKDETKRKHQGLEAVFRETFPIESPNNDMIMEYSHYILGEPKRSPQECKDTDATFAMPLKAVIRLIIKETGEIREQTVYMGDLPVMTEQGTFIINGAERVVVSQLHRSPGIFFSYDMERDVFSARVIPYRGSWLEFEMDNKGILIAKIDRKKKFPATLLIKSLGHGTNEEVLRLFYSSKKEKIAGATSKDLKKILGRRTINDIINMETGEVMLEAGSKVNEDNISILKEMKVKEVELIEFPKGKDNPILINALEKDGVNDYEDAILKFHSLMRQGEPSTIENATTELTRLFFSPKTFDLGEVGRYKINSKFEFNNPKEFSGEKARVLRPADIIETVRYILNLFSETENYYPDDIDHLGNRRIRSVGELISNQLKTGFSRVERVIKERMTVQEIETQTPQLLISIKPITAVINEFFGSSQLSQFMDQTNPLAELTHKRRLNALGPGGLSRDRAGMEVRDVHYSHYGRMCPIETPEGPNIGLILSMSSYARVNDYGFLETPYRTVKNGKVTGQIEHLTADKEEYHYIAQASGVIDEKGELKNKLISTRHRGDFPFRNPSEIQYMDLAPLQVVSVSTALIPFLEHDDANRALMGSNMQRQAVPLLREEAPFVGTGMETRAAYDSRICIVNKHDGVVTSVDAETIVVERKGGKESDTYSLTKFKKTNQGTCFNQKPIVGVVHSEINGKVSKVSKEKIEVTGENGELKEYVLQIGSKQYAPIVSSGEEVKRGTTLAGQVVVGEKLDEMGNILVKGTVLADGPAVDNGVLALGRNVLAAFMPWEGYNFEDAILISERIVRDDVFSSIHIEEFEIQARETKLGPEQITRDIPNLSDKAFRDLDETGVIRIGAEVKPGDILVGMVTPKGETDLTPEYKLLHSIFGEKAKDVRDSSLRMPNGFEGTVIDIKRFSRENQDELPAGVEEMVKVFVARKRKLLVGDKMAGRHGNKGVVARVMAEEDMPYMEDGTPLDIVLNPLGVPSRMNLGQIFETQLGFAASKLGISFETPVFDGAEESDVDNFCKEANLPLNSKFKLYDGRTGLPFMNEVFCGYIYILKLAHLVEDKIHARSTGPYSLVTQQPLGGKAQFGGQRLGEMEVWALEAYGASHTLQELLTIKSDDMLGRARIYEAIVKGIHSIKPGIPESFNVLVQELRGLALDIIITDSEGNTVDISDYEDEYSKSKKKIKFETIENA</sequence>
<dbReference type="EC" id="2.7.7.6" evidence="1"/>
<dbReference type="EMBL" id="CP000350">
    <property type="protein sequence ID" value="ABJ76831.1"/>
    <property type="molecule type" value="Genomic_DNA"/>
</dbReference>
<dbReference type="RefSeq" id="WP_011669621.1">
    <property type="nucleotide sequence ID" value="NC_008510.1"/>
</dbReference>
<dbReference type="SMR" id="Q04QI9"/>
<dbReference type="KEGG" id="lbj:LBJ_2365"/>
<dbReference type="HOGENOM" id="CLU_000524_4_3_12"/>
<dbReference type="Proteomes" id="UP000000656">
    <property type="component" value="Chromosome 1"/>
</dbReference>
<dbReference type="GO" id="GO:0000428">
    <property type="term" value="C:DNA-directed RNA polymerase complex"/>
    <property type="evidence" value="ECO:0007669"/>
    <property type="project" value="UniProtKB-KW"/>
</dbReference>
<dbReference type="GO" id="GO:0003677">
    <property type="term" value="F:DNA binding"/>
    <property type="evidence" value="ECO:0007669"/>
    <property type="project" value="UniProtKB-UniRule"/>
</dbReference>
<dbReference type="GO" id="GO:0003899">
    <property type="term" value="F:DNA-directed RNA polymerase activity"/>
    <property type="evidence" value="ECO:0007669"/>
    <property type="project" value="UniProtKB-UniRule"/>
</dbReference>
<dbReference type="GO" id="GO:0032549">
    <property type="term" value="F:ribonucleoside binding"/>
    <property type="evidence" value="ECO:0007669"/>
    <property type="project" value="InterPro"/>
</dbReference>
<dbReference type="GO" id="GO:0006351">
    <property type="term" value="P:DNA-templated transcription"/>
    <property type="evidence" value="ECO:0007669"/>
    <property type="project" value="UniProtKB-UniRule"/>
</dbReference>
<dbReference type="CDD" id="cd00653">
    <property type="entry name" value="RNA_pol_B_RPB2"/>
    <property type="match status" value="1"/>
</dbReference>
<dbReference type="Gene3D" id="2.40.50.100">
    <property type="match status" value="2"/>
</dbReference>
<dbReference type="Gene3D" id="2.40.50.150">
    <property type="match status" value="1"/>
</dbReference>
<dbReference type="Gene3D" id="3.90.1100.10">
    <property type="match status" value="1"/>
</dbReference>
<dbReference type="Gene3D" id="2.30.150.10">
    <property type="entry name" value="DNA-directed RNA polymerase, beta subunit, external 1 domain"/>
    <property type="match status" value="1"/>
</dbReference>
<dbReference type="Gene3D" id="2.40.270.10">
    <property type="entry name" value="DNA-directed RNA polymerase, subunit 2, domain 6"/>
    <property type="match status" value="1"/>
</dbReference>
<dbReference type="Gene3D" id="3.90.1800.10">
    <property type="entry name" value="RNA polymerase alpha subunit dimerisation domain"/>
    <property type="match status" value="1"/>
</dbReference>
<dbReference type="Gene3D" id="3.90.1110.10">
    <property type="entry name" value="RNA polymerase Rpb2, domain 2"/>
    <property type="match status" value="1"/>
</dbReference>
<dbReference type="HAMAP" id="MF_01321">
    <property type="entry name" value="RNApol_bact_RpoB"/>
    <property type="match status" value="1"/>
</dbReference>
<dbReference type="InterPro" id="IPR042107">
    <property type="entry name" value="DNA-dir_RNA_pol_bsu_ext_1_sf"/>
</dbReference>
<dbReference type="InterPro" id="IPR019462">
    <property type="entry name" value="DNA-dir_RNA_pol_bsu_external_1"/>
</dbReference>
<dbReference type="InterPro" id="IPR015712">
    <property type="entry name" value="DNA-dir_RNA_pol_su2"/>
</dbReference>
<dbReference type="InterPro" id="IPR007120">
    <property type="entry name" value="DNA-dir_RNAP_su2_dom"/>
</dbReference>
<dbReference type="InterPro" id="IPR037033">
    <property type="entry name" value="DNA-dir_RNAP_su2_hyb_sf"/>
</dbReference>
<dbReference type="InterPro" id="IPR010243">
    <property type="entry name" value="RNA_pol_bsu_bac"/>
</dbReference>
<dbReference type="InterPro" id="IPR007121">
    <property type="entry name" value="RNA_pol_bsu_CS"/>
</dbReference>
<dbReference type="InterPro" id="IPR007644">
    <property type="entry name" value="RNA_pol_bsu_protrusion"/>
</dbReference>
<dbReference type="InterPro" id="IPR007642">
    <property type="entry name" value="RNA_pol_Rpb2_2"/>
</dbReference>
<dbReference type="InterPro" id="IPR037034">
    <property type="entry name" value="RNA_pol_Rpb2_2_sf"/>
</dbReference>
<dbReference type="InterPro" id="IPR007645">
    <property type="entry name" value="RNA_pol_Rpb2_3"/>
</dbReference>
<dbReference type="InterPro" id="IPR007641">
    <property type="entry name" value="RNA_pol_Rpb2_7"/>
</dbReference>
<dbReference type="InterPro" id="IPR014724">
    <property type="entry name" value="RNA_pol_RPB2_OB-fold"/>
</dbReference>
<dbReference type="NCBIfam" id="TIGR02013">
    <property type="entry name" value="rpoB"/>
    <property type="match status" value="1"/>
</dbReference>
<dbReference type="PANTHER" id="PTHR20856">
    <property type="entry name" value="DNA-DIRECTED RNA POLYMERASE I SUBUNIT 2"/>
    <property type="match status" value="1"/>
</dbReference>
<dbReference type="Pfam" id="PF04563">
    <property type="entry name" value="RNA_pol_Rpb2_1"/>
    <property type="match status" value="1"/>
</dbReference>
<dbReference type="Pfam" id="PF04561">
    <property type="entry name" value="RNA_pol_Rpb2_2"/>
    <property type="match status" value="1"/>
</dbReference>
<dbReference type="Pfam" id="PF04565">
    <property type="entry name" value="RNA_pol_Rpb2_3"/>
    <property type="match status" value="1"/>
</dbReference>
<dbReference type="Pfam" id="PF10385">
    <property type="entry name" value="RNA_pol_Rpb2_45"/>
    <property type="match status" value="1"/>
</dbReference>
<dbReference type="Pfam" id="PF00562">
    <property type="entry name" value="RNA_pol_Rpb2_6"/>
    <property type="match status" value="1"/>
</dbReference>
<dbReference type="Pfam" id="PF04560">
    <property type="entry name" value="RNA_pol_Rpb2_7"/>
    <property type="match status" value="1"/>
</dbReference>
<dbReference type="SUPFAM" id="SSF64484">
    <property type="entry name" value="beta and beta-prime subunits of DNA dependent RNA-polymerase"/>
    <property type="match status" value="1"/>
</dbReference>
<dbReference type="PROSITE" id="PS01166">
    <property type="entry name" value="RNA_POL_BETA"/>
    <property type="match status" value="1"/>
</dbReference>
<feature type="chain" id="PRO_0000300338" description="DNA-directed RNA polymerase subunit beta">
    <location>
        <begin position="1"/>
        <end position="1226"/>
    </location>
</feature>
<protein>
    <recommendedName>
        <fullName evidence="1">DNA-directed RNA polymerase subunit beta</fullName>
        <shortName evidence="1">RNAP subunit beta</shortName>
        <ecNumber evidence="1">2.7.7.6</ecNumber>
    </recommendedName>
    <alternativeName>
        <fullName evidence="1">RNA polymerase subunit beta</fullName>
    </alternativeName>
    <alternativeName>
        <fullName evidence="1">Transcriptase subunit beta</fullName>
    </alternativeName>
</protein>
<evidence type="ECO:0000255" key="1">
    <source>
        <dbReference type="HAMAP-Rule" id="MF_01321"/>
    </source>
</evidence>
<keyword id="KW-0240">DNA-directed RNA polymerase</keyword>
<keyword id="KW-0548">Nucleotidyltransferase</keyword>
<keyword id="KW-0804">Transcription</keyword>
<keyword id="KW-0808">Transferase</keyword>
<proteinExistence type="inferred from homology"/>
<accession>Q04QI9</accession>
<gene>
    <name evidence="1" type="primary">rpoB</name>
    <name type="ordered locus">LBJ_2365</name>
</gene>
<reference key="1">
    <citation type="journal article" date="2006" name="Proc. Natl. Acad. Sci. U.S.A.">
        <title>Genome reduction in Leptospira borgpetersenii reflects limited transmission potential.</title>
        <authorList>
            <person name="Bulach D.M."/>
            <person name="Zuerner R.L."/>
            <person name="Wilson P."/>
            <person name="Seemann T."/>
            <person name="McGrath A."/>
            <person name="Cullen P.A."/>
            <person name="Davis J."/>
            <person name="Johnson M."/>
            <person name="Kuczek E."/>
            <person name="Alt D.P."/>
            <person name="Peterson-Burch B."/>
            <person name="Coppel R.L."/>
            <person name="Rood J.I."/>
            <person name="Davies J.K."/>
            <person name="Adler B."/>
        </authorList>
    </citation>
    <scope>NUCLEOTIDE SEQUENCE [LARGE SCALE GENOMIC DNA]</scope>
    <source>
        <strain>JB197</strain>
    </source>
</reference>
<organism>
    <name type="scientific">Leptospira borgpetersenii serovar Hardjo-bovis (strain JB197)</name>
    <dbReference type="NCBI Taxonomy" id="355277"/>
    <lineage>
        <taxon>Bacteria</taxon>
        <taxon>Pseudomonadati</taxon>
        <taxon>Spirochaetota</taxon>
        <taxon>Spirochaetia</taxon>
        <taxon>Leptospirales</taxon>
        <taxon>Leptospiraceae</taxon>
        <taxon>Leptospira</taxon>
    </lineage>
</organism>
<comment type="function">
    <text evidence="1">DNA-dependent RNA polymerase catalyzes the transcription of DNA into RNA using the four ribonucleoside triphosphates as substrates.</text>
</comment>
<comment type="catalytic activity">
    <reaction evidence="1">
        <text>RNA(n) + a ribonucleoside 5'-triphosphate = RNA(n+1) + diphosphate</text>
        <dbReference type="Rhea" id="RHEA:21248"/>
        <dbReference type="Rhea" id="RHEA-COMP:14527"/>
        <dbReference type="Rhea" id="RHEA-COMP:17342"/>
        <dbReference type="ChEBI" id="CHEBI:33019"/>
        <dbReference type="ChEBI" id="CHEBI:61557"/>
        <dbReference type="ChEBI" id="CHEBI:140395"/>
        <dbReference type="EC" id="2.7.7.6"/>
    </reaction>
</comment>
<comment type="subunit">
    <text evidence="1">The RNAP catalytic core consists of 2 alpha, 1 beta, 1 beta' and 1 omega subunit. When a sigma factor is associated with the core the holoenzyme is formed, which can initiate transcription.</text>
</comment>
<comment type="similarity">
    <text evidence="1">Belongs to the RNA polymerase beta chain family.</text>
</comment>